<feature type="chain" id="PRO_0000260237" description="Soluble pyridine nucleotide transhydrogenase">
    <location>
        <begin position="1"/>
        <end position="469"/>
    </location>
</feature>
<feature type="binding site" evidence="1">
    <location>
        <begin position="39"/>
        <end position="48"/>
    </location>
    <ligand>
        <name>FAD</name>
        <dbReference type="ChEBI" id="CHEBI:57692"/>
    </ligand>
</feature>
<dbReference type="EC" id="1.6.1.1" evidence="1"/>
<dbReference type="EMBL" id="CR378674">
    <property type="protein sequence ID" value="CAG21739.1"/>
    <property type="molecule type" value="Genomic_DNA"/>
</dbReference>
<dbReference type="RefSeq" id="WP_011219980.1">
    <property type="nucleotide sequence ID" value="NC_006370.1"/>
</dbReference>
<dbReference type="SMR" id="Q6LLT9"/>
<dbReference type="STRING" id="298386.PBPRA3468"/>
<dbReference type="KEGG" id="ppr:PBPRA3468"/>
<dbReference type="eggNOG" id="COG1249">
    <property type="taxonomic scope" value="Bacteria"/>
</dbReference>
<dbReference type="HOGENOM" id="CLU_016755_0_0_6"/>
<dbReference type="Proteomes" id="UP000000593">
    <property type="component" value="Chromosome 1"/>
</dbReference>
<dbReference type="GO" id="GO:0005829">
    <property type="term" value="C:cytosol"/>
    <property type="evidence" value="ECO:0007669"/>
    <property type="project" value="TreeGrafter"/>
</dbReference>
<dbReference type="GO" id="GO:0004148">
    <property type="term" value="F:dihydrolipoyl dehydrogenase (NADH) activity"/>
    <property type="evidence" value="ECO:0007669"/>
    <property type="project" value="TreeGrafter"/>
</dbReference>
<dbReference type="GO" id="GO:0050660">
    <property type="term" value="F:flavin adenine dinucleotide binding"/>
    <property type="evidence" value="ECO:0007669"/>
    <property type="project" value="TreeGrafter"/>
</dbReference>
<dbReference type="GO" id="GO:0003957">
    <property type="term" value="F:NAD(P)+ transhydrogenase (Si-specific) activity"/>
    <property type="evidence" value="ECO:0007669"/>
    <property type="project" value="UniProtKB-UniRule"/>
</dbReference>
<dbReference type="GO" id="GO:0006103">
    <property type="term" value="P:2-oxoglutarate metabolic process"/>
    <property type="evidence" value="ECO:0007669"/>
    <property type="project" value="TreeGrafter"/>
</dbReference>
<dbReference type="GO" id="GO:0006739">
    <property type="term" value="P:NADP metabolic process"/>
    <property type="evidence" value="ECO:0007669"/>
    <property type="project" value="UniProtKB-UniRule"/>
</dbReference>
<dbReference type="FunFam" id="3.30.390.30:FF:000002">
    <property type="entry name" value="Soluble pyridine nucleotide transhydrogenase"/>
    <property type="match status" value="1"/>
</dbReference>
<dbReference type="FunFam" id="3.50.50.60:FF:000008">
    <property type="entry name" value="Soluble pyridine nucleotide transhydrogenase"/>
    <property type="match status" value="1"/>
</dbReference>
<dbReference type="Gene3D" id="3.30.390.30">
    <property type="match status" value="1"/>
</dbReference>
<dbReference type="Gene3D" id="3.50.50.60">
    <property type="entry name" value="FAD/NAD(P)-binding domain"/>
    <property type="match status" value="2"/>
</dbReference>
<dbReference type="HAMAP" id="MF_00247">
    <property type="entry name" value="SthA"/>
    <property type="match status" value="1"/>
</dbReference>
<dbReference type="InterPro" id="IPR050151">
    <property type="entry name" value="Class-I_Pyr_Nuc-Dis_Oxidored"/>
</dbReference>
<dbReference type="InterPro" id="IPR036188">
    <property type="entry name" value="FAD/NAD-bd_sf"/>
</dbReference>
<dbReference type="InterPro" id="IPR023753">
    <property type="entry name" value="FAD/NAD-binding_dom"/>
</dbReference>
<dbReference type="InterPro" id="IPR016156">
    <property type="entry name" value="FAD/NAD-linked_Rdtase_dimer_sf"/>
</dbReference>
<dbReference type="InterPro" id="IPR001100">
    <property type="entry name" value="Pyr_nuc-diS_OxRdtase"/>
</dbReference>
<dbReference type="InterPro" id="IPR004099">
    <property type="entry name" value="Pyr_nucl-diS_OxRdtase_dimer"/>
</dbReference>
<dbReference type="InterPro" id="IPR022962">
    <property type="entry name" value="STH_gammaproteobact"/>
</dbReference>
<dbReference type="NCBIfam" id="NF003585">
    <property type="entry name" value="PRK05249.1"/>
    <property type="match status" value="1"/>
</dbReference>
<dbReference type="PANTHER" id="PTHR22912">
    <property type="entry name" value="DISULFIDE OXIDOREDUCTASE"/>
    <property type="match status" value="1"/>
</dbReference>
<dbReference type="PANTHER" id="PTHR22912:SF93">
    <property type="entry name" value="SOLUBLE PYRIDINE NUCLEOTIDE TRANSHYDROGENASE"/>
    <property type="match status" value="1"/>
</dbReference>
<dbReference type="Pfam" id="PF07992">
    <property type="entry name" value="Pyr_redox_2"/>
    <property type="match status" value="1"/>
</dbReference>
<dbReference type="Pfam" id="PF02852">
    <property type="entry name" value="Pyr_redox_dim"/>
    <property type="match status" value="1"/>
</dbReference>
<dbReference type="PIRSF" id="PIRSF000350">
    <property type="entry name" value="Mercury_reductase_MerA"/>
    <property type="match status" value="1"/>
</dbReference>
<dbReference type="PRINTS" id="PR00368">
    <property type="entry name" value="FADPNR"/>
</dbReference>
<dbReference type="PRINTS" id="PR00411">
    <property type="entry name" value="PNDRDTASEI"/>
</dbReference>
<dbReference type="SUPFAM" id="SSF51905">
    <property type="entry name" value="FAD/NAD(P)-binding domain"/>
    <property type="match status" value="1"/>
</dbReference>
<dbReference type="SUPFAM" id="SSF55424">
    <property type="entry name" value="FAD/NAD-linked reductases, dimerisation (C-terminal) domain"/>
    <property type="match status" value="1"/>
</dbReference>
<protein>
    <recommendedName>
        <fullName evidence="1">Soluble pyridine nucleotide transhydrogenase</fullName>
        <shortName evidence="1">STH</shortName>
        <ecNumber evidence="1">1.6.1.1</ecNumber>
    </recommendedName>
    <alternativeName>
        <fullName evidence="1">NAD(P)(+) transhydrogenase [B-specific]</fullName>
    </alternativeName>
</protein>
<gene>
    <name evidence="1" type="primary">sthA</name>
    <name type="ordered locus">PBPRA3468</name>
</gene>
<sequence>MTKNKKPTHFDAIIIGSGPGGEGAAMGLTKAGLNVAVIERENSVGGGCTHWGTIPSKALRHAVSRIIEYNQNPLYCKNNSSLHSTFSQILGHAQDVVNKQTRMRQGFYDRNKCSLIFGEASFIDAHTVRVKNADNSTDLYSADKFVIATGSRPYHPEGVDFDHSRVYDSDSILQLEHDPRHIIIYGAGVIGSEYASIFRGLGVKVDLINTRHRLLEFLDNEISDSLSYHLWNSGAMIRNGETFEKIEGTDDSIILHLESGKKMRADCLLYANGRTGNTDKLNLNKVGLTPDSRGQLAVNQNYCTDVDHVYAVGDVIGYPSLASAAYDQGRFVAQAITTGEAQGSLIDHIPTGIYTIPEISSVGKTEQQLTADKVPYEVGRSQFKHLARAQIAGTEVGSLKILFHRETKEILGIHCFGERAAEIIHIGQAIMEQKGDGNTIDYFVNTTFNYPTMAEAYRVAALNGLNRLF</sequence>
<organism>
    <name type="scientific">Photobacterium profundum (strain SS9)</name>
    <dbReference type="NCBI Taxonomy" id="298386"/>
    <lineage>
        <taxon>Bacteria</taxon>
        <taxon>Pseudomonadati</taxon>
        <taxon>Pseudomonadota</taxon>
        <taxon>Gammaproteobacteria</taxon>
        <taxon>Vibrionales</taxon>
        <taxon>Vibrionaceae</taxon>
        <taxon>Photobacterium</taxon>
    </lineage>
</organism>
<reference key="1">
    <citation type="journal article" date="2005" name="Science">
        <title>Life at depth: Photobacterium profundum genome sequence and expression analysis.</title>
        <authorList>
            <person name="Vezzi A."/>
            <person name="Campanaro S."/>
            <person name="D'Angelo M."/>
            <person name="Simonato F."/>
            <person name="Vitulo N."/>
            <person name="Lauro F.M."/>
            <person name="Cestaro A."/>
            <person name="Malacrida G."/>
            <person name="Simionati B."/>
            <person name="Cannata N."/>
            <person name="Romualdi C."/>
            <person name="Bartlett D.H."/>
            <person name="Valle G."/>
        </authorList>
    </citation>
    <scope>NUCLEOTIDE SEQUENCE [LARGE SCALE GENOMIC DNA]</scope>
    <source>
        <strain>ATCC BAA-1253 / SS9</strain>
    </source>
</reference>
<keyword id="KW-0963">Cytoplasm</keyword>
<keyword id="KW-0274">FAD</keyword>
<keyword id="KW-0285">Flavoprotein</keyword>
<keyword id="KW-0520">NAD</keyword>
<keyword id="KW-0521">NADP</keyword>
<keyword id="KW-0560">Oxidoreductase</keyword>
<keyword id="KW-1185">Reference proteome</keyword>
<name>STHA_PHOPR</name>
<comment type="function">
    <text evidence="1">Conversion of NADPH, generated by peripheral catabolic pathways, to NADH, which can enter the respiratory chain for energy generation.</text>
</comment>
<comment type="catalytic activity">
    <reaction evidence="1">
        <text>NAD(+) + NADPH = NADH + NADP(+)</text>
        <dbReference type="Rhea" id="RHEA:11692"/>
        <dbReference type="ChEBI" id="CHEBI:57540"/>
        <dbReference type="ChEBI" id="CHEBI:57783"/>
        <dbReference type="ChEBI" id="CHEBI:57945"/>
        <dbReference type="ChEBI" id="CHEBI:58349"/>
        <dbReference type="EC" id="1.6.1.1"/>
    </reaction>
</comment>
<comment type="cofactor">
    <cofactor evidence="1">
        <name>FAD</name>
        <dbReference type="ChEBI" id="CHEBI:57692"/>
    </cofactor>
    <text evidence="1">Binds 1 FAD per subunit.</text>
</comment>
<comment type="subcellular location">
    <subcellularLocation>
        <location evidence="1">Cytoplasm</location>
    </subcellularLocation>
</comment>
<comment type="similarity">
    <text evidence="1">Belongs to the class-I pyridine nucleotide-disulfide oxidoreductase family.</text>
</comment>
<accession>Q6LLT9</accession>
<proteinExistence type="inferred from homology"/>
<evidence type="ECO:0000255" key="1">
    <source>
        <dbReference type="HAMAP-Rule" id="MF_00247"/>
    </source>
</evidence>